<feature type="chain" id="PRO_1000185585" description="UPF0398 protein SEQ_1788">
    <location>
        <begin position="1"/>
        <end position="171"/>
    </location>
</feature>
<dbReference type="EMBL" id="FM204883">
    <property type="protein sequence ID" value="CAW94909.1"/>
    <property type="molecule type" value="Genomic_DNA"/>
</dbReference>
<dbReference type="RefSeq" id="WP_012680005.1">
    <property type="nucleotide sequence ID" value="NC_012471.1"/>
</dbReference>
<dbReference type="SMR" id="C0M791"/>
<dbReference type="KEGG" id="seu:SEQ_1788"/>
<dbReference type="HOGENOM" id="CLU_105319_0_0_9"/>
<dbReference type="OrthoDB" id="2301957at2"/>
<dbReference type="Proteomes" id="UP000001365">
    <property type="component" value="Chromosome"/>
</dbReference>
<dbReference type="Gene3D" id="3.40.50.450">
    <property type="match status" value="1"/>
</dbReference>
<dbReference type="HAMAP" id="MF_01575">
    <property type="entry name" value="UPF0398"/>
    <property type="match status" value="1"/>
</dbReference>
<dbReference type="InterPro" id="IPR010697">
    <property type="entry name" value="YspA"/>
</dbReference>
<dbReference type="NCBIfam" id="NF010181">
    <property type="entry name" value="PRK13660.1"/>
    <property type="match status" value="1"/>
</dbReference>
<dbReference type="PANTHER" id="PTHR38440:SF1">
    <property type="entry name" value="UPF0398 PROTEIN SPR0331"/>
    <property type="match status" value="1"/>
</dbReference>
<dbReference type="PANTHER" id="PTHR38440">
    <property type="entry name" value="UPF0398 PROTEIN YPSA"/>
    <property type="match status" value="1"/>
</dbReference>
<dbReference type="Pfam" id="PF06908">
    <property type="entry name" value="YpsA"/>
    <property type="match status" value="1"/>
</dbReference>
<dbReference type="PIRSF" id="PIRSF021290">
    <property type="entry name" value="DUF1273"/>
    <property type="match status" value="1"/>
</dbReference>
<dbReference type="SUPFAM" id="SSF102405">
    <property type="entry name" value="MCP/YpsA-like"/>
    <property type="match status" value="1"/>
</dbReference>
<protein>
    <recommendedName>
        <fullName evidence="1">UPF0398 protein SEQ_1788</fullName>
    </recommendedName>
</protein>
<sequence>MTAILVTGYRSFELGIFSEKDKRVAIIKKAIERDLIAYLEEGVDWFIFTGNLGFEQWALEVANDLKKTYPLKTATIFAFETHGSTWNDRNQQQLQQFRETDFVKYSYPSYESPKQLKSYHHFLIHNTDGAYLFYDSEHETRLSYLVAAMKEQPCYPLSFLNFERLNDIADE</sequence>
<organism>
    <name type="scientific">Streptococcus equi subsp. equi (strain 4047)</name>
    <dbReference type="NCBI Taxonomy" id="553482"/>
    <lineage>
        <taxon>Bacteria</taxon>
        <taxon>Bacillati</taxon>
        <taxon>Bacillota</taxon>
        <taxon>Bacilli</taxon>
        <taxon>Lactobacillales</taxon>
        <taxon>Streptococcaceae</taxon>
        <taxon>Streptococcus</taxon>
    </lineage>
</organism>
<gene>
    <name type="ordered locus">SEQ_1788</name>
</gene>
<accession>C0M791</accession>
<proteinExistence type="inferred from homology"/>
<evidence type="ECO:0000255" key="1">
    <source>
        <dbReference type="HAMAP-Rule" id="MF_01575"/>
    </source>
</evidence>
<name>Y1788_STRE4</name>
<reference key="1">
    <citation type="journal article" date="2009" name="PLoS Pathog.">
        <title>Genomic evidence for the evolution of Streptococcus equi: host restriction, increased virulence, and genetic exchange with human pathogens.</title>
        <authorList>
            <person name="Holden M.T.G."/>
            <person name="Heather Z."/>
            <person name="Paillot R."/>
            <person name="Steward K.F."/>
            <person name="Webb K."/>
            <person name="Ainslie F."/>
            <person name="Jourdan T."/>
            <person name="Bason N.C."/>
            <person name="Holroyd N.E."/>
            <person name="Mungall K."/>
            <person name="Quail M.A."/>
            <person name="Sanders M."/>
            <person name="Simmonds M."/>
            <person name="Willey D."/>
            <person name="Brooks K."/>
            <person name="Aanensen D.M."/>
            <person name="Spratt B.G."/>
            <person name="Jolley K.A."/>
            <person name="Maiden M.C.J."/>
            <person name="Kehoe M."/>
            <person name="Chanter N."/>
            <person name="Bentley S.D."/>
            <person name="Robinson C."/>
            <person name="Maskell D.J."/>
            <person name="Parkhill J."/>
            <person name="Waller A.S."/>
        </authorList>
    </citation>
    <scope>NUCLEOTIDE SEQUENCE [LARGE SCALE GENOMIC DNA]</scope>
    <source>
        <strain>4047</strain>
    </source>
</reference>
<comment type="similarity">
    <text evidence="1">Belongs to the UPF0398 family.</text>
</comment>